<organism>
    <name type="scientific">Pectobacterium atrosepticum (strain SCRI 1043 / ATCC BAA-672)</name>
    <name type="common">Erwinia carotovora subsp. atroseptica</name>
    <dbReference type="NCBI Taxonomy" id="218491"/>
    <lineage>
        <taxon>Bacteria</taxon>
        <taxon>Pseudomonadati</taxon>
        <taxon>Pseudomonadota</taxon>
        <taxon>Gammaproteobacteria</taxon>
        <taxon>Enterobacterales</taxon>
        <taxon>Pectobacteriaceae</taxon>
        <taxon>Pectobacterium</taxon>
    </lineage>
</organism>
<comment type="function">
    <text evidence="1">Catalyzes the condensation reaction of fatty acid synthesis by the addition to an acyl acceptor of two carbons from malonyl-ACP. Catalyzes the first condensation reaction which initiates fatty acid synthesis and may therefore play a role in governing the total rate of fatty acid production. Possesses both acetoacetyl-ACP synthase and acetyl transacylase activities. Its substrate specificity determines the biosynthesis of branched-chain and/or straight-chain of fatty acids.</text>
</comment>
<comment type="catalytic activity">
    <reaction evidence="1">
        <text>malonyl-[ACP] + acetyl-CoA + H(+) = 3-oxobutanoyl-[ACP] + CO2 + CoA</text>
        <dbReference type="Rhea" id="RHEA:12080"/>
        <dbReference type="Rhea" id="RHEA-COMP:9623"/>
        <dbReference type="Rhea" id="RHEA-COMP:9625"/>
        <dbReference type="ChEBI" id="CHEBI:15378"/>
        <dbReference type="ChEBI" id="CHEBI:16526"/>
        <dbReference type="ChEBI" id="CHEBI:57287"/>
        <dbReference type="ChEBI" id="CHEBI:57288"/>
        <dbReference type="ChEBI" id="CHEBI:78449"/>
        <dbReference type="ChEBI" id="CHEBI:78450"/>
        <dbReference type="EC" id="2.3.1.180"/>
    </reaction>
</comment>
<comment type="pathway">
    <text evidence="1">Lipid metabolism; fatty acid biosynthesis.</text>
</comment>
<comment type="subunit">
    <text evidence="1">Homodimer.</text>
</comment>
<comment type="subcellular location">
    <subcellularLocation>
        <location evidence="1">Cytoplasm</location>
    </subcellularLocation>
</comment>
<comment type="domain">
    <text evidence="1">The last Arg residue of the ACP-binding site is essential for the weak association between ACP/AcpP and FabH.</text>
</comment>
<comment type="similarity">
    <text evidence="1">Belongs to the thiolase-like superfamily. FabH family.</text>
</comment>
<name>FABH_PECAS</name>
<sequence length="317" mass="34015">MYTKIIGTGSYLPEEIRTNADLEKMVETTDEWIVTRTGIRERRIAAPDENVATMGYRAAQKALEMANVDASEVGLLIVATTSSSHAFPSSACQVQQLLGIKDTIAFDLAAACAGFTYALSVADQYVKSGAVKYALVIGSDTLSRTLDPEDRGTLILFGDGAGAVLLTTSEQPGILSTHLHADGRYGELLTLPHQDRNHTDKPAYLTMAGNEVFKVAVTELAHIVEETLQAAQLDKSELDWLVPHQANLRIISATAKKLGMGMDKVVVTLDRHGNTSAASVPSALDEAVRDGRIKPGQLVLLEAFGGGFTWGSALVRF</sequence>
<accession>Q6D690</accession>
<keyword id="KW-0012">Acyltransferase</keyword>
<keyword id="KW-0963">Cytoplasm</keyword>
<keyword id="KW-0275">Fatty acid biosynthesis</keyword>
<keyword id="KW-0276">Fatty acid metabolism</keyword>
<keyword id="KW-0444">Lipid biosynthesis</keyword>
<keyword id="KW-0443">Lipid metabolism</keyword>
<keyword id="KW-0511">Multifunctional enzyme</keyword>
<keyword id="KW-1185">Reference proteome</keyword>
<keyword id="KW-0808">Transferase</keyword>
<protein>
    <recommendedName>
        <fullName evidence="1">Beta-ketoacyl-[acyl-carrier-protein] synthase III</fullName>
        <shortName evidence="1">Beta-ketoacyl-ACP synthase III</shortName>
        <shortName evidence="1">KAS III</shortName>
        <ecNumber evidence="1">2.3.1.180</ecNumber>
    </recommendedName>
    <alternativeName>
        <fullName evidence="1">3-oxoacyl-[acyl-carrier-protein] synthase 3</fullName>
    </alternativeName>
    <alternativeName>
        <fullName evidence="1">3-oxoacyl-[acyl-carrier-protein] synthase III</fullName>
    </alternativeName>
</protein>
<dbReference type="EC" id="2.3.1.180" evidence="1"/>
<dbReference type="EMBL" id="BX950851">
    <property type="protein sequence ID" value="CAG74700.1"/>
    <property type="molecule type" value="Genomic_DNA"/>
</dbReference>
<dbReference type="RefSeq" id="WP_011093371.1">
    <property type="nucleotide sequence ID" value="NC_004547.2"/>
</dbReference>
<dbReference type="SMR" id="Q6D690"/>
<dbReference type="STRING" id="218491.ECA1795"/>
<dbReference type="KEGG" id="eca:ECA1795"/>
<dbReference type="PATRIC" id="fig|218491.5.peg.1823"/>
<dbReference type="eggNOG" id="COG0332">
    <property type="taxonomic scope" value="Bacteria"/>
</dbReference>
<dbReference type="HOGENOM" id="CLU_039592_3_1_6"/>
<dbReference type="OrthoDB" id="9815506at2"/>
<dbReference type="UniPathway" id="UPA00094"/>
<dbReference type="Proteomes" id="UP000007966">
    <property type="component" value="Chromosome"/>
</dbReference>
<dbReference type="GO" id="GO:0005737">
    <property type="term" value="C:cytoplasm"/>
    <property type="evidence" value="ECO:0007669"/>
    <property type="project" value="UniProtKB-SubCell"/>
</dbReference>
<dbReference type="GO" id="GO:0004315">
    <property type="term" value="F:3-oxoacyl-[acyl-carrier-protein] synthase activity"/>
    <property type="evidence" value="ECO:0007669"/>
    <property type="project" value="InterPro"/>
</dbReference>
<dbReference type="GO" id="GO:0033818">
    <property type="term" value="F:beta-ketoacyl-acyl-carrier-protein synthase III activity"/>
    <property type="evidence" value="ECO:0007669"/>
    <property type="project" value="UniProtKB-UniRule"/>
</dbReference>
<dbReference type="GO" id="GO:0006633">
    <property type="term" value="P:fatty acid biosynthetic process"/>
    <property type="evidence" value="ECO:0007669"/>
    <property type="project" value="UniProtKB-UniRule"/>
</dbReference>
<dbReference type="CDD" id="cd00830">
    <property type="entry name" value="KAS_III"/>
    <property type="match status" value="1"/>
</dbReference>
<dbReference type="FunFam" id="3.40.47.10:FF:000004">
    <property type="entry name" value="3-oxoacyl-[acyl-carrier-protein] synthase 3"/>
    <property type="match status" value="1"/>
</dbReference>
<dbReference type="Gene3D" id="3.40.47.10">
    <property type="match status" value="1"/>
</dbReference>
<dbReference type="HAMAP" id="MF_01815">
    <property type="entry name" value="FabH"/>
    <property type="match status" value="1"/>
</dbReference>
<dbReference type="InterPro" id="IPR013747">
    <property type="entry name" value="ACP_syn_III_C"/>
</dbReference>
<dbReference type="InterPro" id="IPR013751">
    <property type="entry name" value="ACP_syn_III_N"/>
</dbReference>
<dbReference type="InterPro" id="IPR004655">
    <property type="entry name" value="FabH"/>
</dbReference>
<dbReference type="InterPro" id="IPR016039">
    <property type="entry name" value="Thiolase-like"/>
</dbReference>
<dbReference type="NCBIfam" id="TIGR00747">
    <property type="entry name" value="fabH"/>
    <property type="match status" value="1"/>
</dbReference>
<dbReference type="NCBIfam" id="NF006829">
    <property type="entry name" value="PRK09352.1"/>
    <property type="match status" value="1"/>
</dbReference>
<dbReference type="PANTHER" id="PTHR43091">
    <property type="entry name" value="3-OXOACYL-[ACYL-CARRIER-PROTEIN] SYNTHASE"/>
    <property type="match status" value="1"/>
</dbReference>
<dbReference type="PANTHER" id="PTHR43091:SF1">
    <property type="entry name" value="BETA-KETOACYL-[ACYL-CARRIER-PROTEIN] SYNTHASE III, CHLOROPLASTIC"/>
    <property type="match status" value="1"/>
</dbReference>
<dbReference type="Pfam" id="PF08545">
    <property type="entry name" value="ACP_syn_III"/>
    <property type="match status" value="1"/>
</dbReference>
<dbReference type="Pfam" id="PF08541">
    <property type="entry name" value="ACP_syn_III_C"/>
    <property type="match status" value="1"/>
</dbReference>
<dbReference type="SUPFAM" id="SSF53901">
    <property type="entry name" value="Thiolase-like"/>
    <property type="match status" value="1"/>
</dbReference>
<reference key="1">
    <citation type="journal article" date="2004" name="Proc. Natl. Acad. Sci. U.S.A.">
        <title>Genome sequence of the enterobacterial phytopathogen Erwinia carotovora subsp. atroseptica and characterization of virulence factors.</title>
        <authorList>
            <person name="Bell K.S."/>
            <person name="Sebaihia M."/>
            <person name="Pritchard L."/>
            <person name="Holden M.T.G."/>
            <person name="Hyman L.J."/>
            <person name="Holeva M.C."/>
            <person name="Thomson N.R."/>
            <person name="Bentley S.D."/>
            <person name="Churcher L.J.C."/>
            <person name="Mungall K."/>
            <person name="Atkin R."/>
            <person name="Bason N."/>
            <person name="Brooks K."/>
            <person name="Chillingworth T."/>
            <person name="Clark K."/>
            <person name="Doggett J."/>
            <person name="Fraser A."/>
            <person name="Hance Z."/>
            <person name="Hauser H."/>
            <person name="Jagels K."/>
            <person name="Moule S."/>
            <person name="Norbertczak H."/>
            <person name="Ormond D."/>
            <person name="Price C."/>
            <person name="Quail M.A."/>
            <person name="Sanders M."/>
            <person name="Walker D."/>
            <person name="Whitehead S."/>
            <person name="Salmond G.P.C."/>
            <person name="Birch P.R.J."/>
            <person name="Parkhill J."/>
            <person name="Toth I.K."/>
        </authorList>
    </citation>
    <scope>NUCLEOTIDE SEQUENCE [LARGE SCALE GENOMIC DNA]</scope>
    <source>
        <strain>SCRI 1043 / ATCC BAA-672</strain>
    </source>
</reference>
<feature type="chain" id="PRO_0000110428" description="Beta-ketoacyl-[acyl-carrier-protein] synthase III">
    <location>
        <begin position="1"/>
        <end position="317"/>
    </location>
</feature>
<feature type="region of interest" description="ACP-binding" evidence="1">
    <location>
        <begin position="245"/>
        <end position="249"/>
    </location>
</feature>
<feature type="active site" evidence="1">
    <location>
        <position position="112"/>
    </location>
</feature>
<feature type="active site" evidence="1">
    <location>
        <position position="244"/>
    </location>
</feature>
<feature type="active site" evidence="1">
    <location>
        <position position="274"/>
    </location>
</feature>
<evidence type="ECO:0000255" key="1">
    <source>
        <dbReference type="HAMAP-Rule" id="MF_01815"/>
    </source>
</evidence>
<gene>
    <name evidence="1" type="primary">fabH</name>
    <name type="ordered locus">ECA1795</name>
</gene>
<proteinExistence type="inferred from homology"/>